<comment type="function">
    <text evidence="1">Catalyzes the reversible transfer of the terminal phosphate group between ATP and AMP. Plays an important role in cellular energy homeostasis and in adenine nucleotide metabolism.</text>
</comment>
<comment type="catalytic activity">
    <reaction evidence="1">
        <text>AMP + ATP = 2 ADP</text>
        <dbReference type="Rhea" id="RHEA:12973"/>
        <dbReference type="ChEBI" id="CHEBI:30616"/>
        <dbReference type="ChEBI" id="CHEBI:456215"/>
        <dbReference type="ChEBI" id="CHEBI:456216"/>
        <dbReference type="EC" id="2.7.4.3"/>
    </reaction>
</comment>
<comment type="pathway">
    <text evidence="1">Purine metabolism; AMP biosynthesis via salvage pathway; AMP from ADP: step 1/1.</text>
</comment>
<comment type="subunit">
    <text evidence="1">Monomer.</text>
</comment>
<comment type="subcellular location">
    <subcellularLocation>
        <location evidence="1">Cytoplasm</location>
    </subcellularLocation>
</comment>
<comment type="domain">
    <text evidence="1">Consists of three domains, a large central CORE domain and two small peripheral domains, NMPbind and LID, which undergo movements during catalysis. The LID domain closes over the site of phosphoryl transfer upon ATP binding. Assembling and dissambling the active center during each catalytic cycle provides an effective means to prevent ATP hydrolysis.</text>
</comment>
<comment type="similarity">
    <text evidence="1">Belongs to the adenylate kinase family.</text>
</comment>
<gene>
    <name evidence="1" type="primary">adk</name>
    <name type="ordered locus">FTW_1200</name>
</gene>
<accession>A4IYJ6</accession>
<dbReference type="EC" id="2.7.4.3" evidence="1"/>
<dbReference type="EMBL" id="CP000608">
    <property type="protein sequence ID" value="ABO46997.1"/>
    <property type="molecule type" value="Genomic_DNA"/>
</dbReference>
<dbReference type="RefSeq" id="WP_003018613.1">
    <property type="nucleotide sequence ID" value="NC_009257.1"/>
</dbReference>
<dbReference type="SMR" id="A4IYJ6"/>
<dbReference type="KEGG" id="ftw:FTW_1200"/>
<dbReference type="HOGENOM" id="CLU_032354_1_2_6"/>
<dbReference type="UniPathway" id="UPA00588">
    <property type="reaction ID" value="UER00649"/>
</dbReference>
<dbReference type="GO" id="GO:0005737">
    <property type="term" value="C:cytoplasm"/>
    <property type="evidence" value="ECO:0007669"/>
    <property type="project" value="UniProtKB-SubCell"/>
</dbReference>
<dbReference type="GO" id="GO:0004017">
    <property type="term" value="F:adenylate kinase activity"/>
    <property type="evidence" value="ECO:0007669"/>
    <property type="project" value="UniProtKB-UniRule"/>
</dbReference>
<dbReference type="GO" id="GO:0005524">
    <property type="term" value="F:ATP binding"/>
    <property type="evidence" value="ECO:0007669"/>
    <property type="project" value="UniProtKB-UniRule"/>
</dbReference>
<dbReference type="GO" id="GO:0044209">
    <property type="term" value="P:AMP salvage"/>
    <property type="evidence" value="ECO:0007669"/>
    <property type="project" value="UniProtKB-UniRule"/>
</dbReference>
<dbReference type="CDD" id="cd01428">
    <property type="entry name" value="ADK"/>
    <property type="match status" value="1"/>
</dbReference>
<dbReference type="FunFam" id="3.40.50.300:FF:000106">
    <property type="entry name" value="Adenylate kinase mitochondrial"/>
    <property type="match status" value="1"/>
</dbReference>
<dbReference type="Gene3D" id="3.40.50.300">
    <property type="entry name" value="P-loop containing nucleotide triphosphate hydrolases"/>
    <property type="match status" value="1"/>
</dbReference>
<dbReference type="HAMAP" id="MF_00235">
    <property type="entry name" value="Adenylate_kinase_Adk"/>
    <property type="match status" value="1"/>
</dbReference>
<dbReference type="InterPro" id="IPR006259">
    <property type="entry name" value="Adenyl_kin_sub"/>
</dbReference>
<dbReference type="InterPro" id="IPR000850">
    <property type="entry name" value="Adenylat/UMP-CMP_kin"/>
</dbReference>
<dbReference type="InterPro" id="IPR007862">
    <property type="entry name" value="Adenylate_kinase_lid-dom"/>
</dbReference>
<dbReference type="InterPro" id="IPR027417">
    <property type="entry name" value="P-loop_NTPase"/>
</dbReference>
<dbReference type="NCBIfam" id="TIGR01351">
    <property type="entry name" value="adk"/>
    <property type="match status" value="1"/>
</dbReference>
<dbReference type="NCBIfam" id="NF001379">
    <property type="entry name" value="PRK00279.1-1"/>
    <property type="match status" value="1"/>
</dbReference>
<dbReference type="NCBIfam" id="NF001380">
    <property type="entry name" value="PRK00279.1-2"/>
    <property type="match status" value="1"/>
</dbReference>
<dbReference type="NCBIfam" id="NF001381">
    <property type="entry name" value="PRK00279.1-3"/>
    <property type="match status" value="1"/>
</dbReference>
<dbReference type="PANTHER" id="PTHR23359">
    <property type="entry name" value="NUCLEOTIDE KINASE"/>
    <property type="match status" value="1"/>
</dbReference>
<dbReference type="Pfam" id="PF00406">
    <property type="entry name" value="ADK"/>
    <property type="match status" value="1"/>
</dbReference>
<dbReference type="Pfam" id="PF05191">
    <property type="entry name" value="ADK_lid"/>
    <property type="match status" value="1"/>
</dbReference>
<dbReference type="PRINTS" id="PR00094">
    <property type="entry name" value="ADENYLTKNASE"/>
</dbReference>
<dbReference type="SUPFAM" id="SSF52540">
    <property type="entry name" value="P-loop containing nucleoside triphosphate hydrolases"/>
    <property type="match status" value="1"/>
</dbReference>
<sequence>MRIILLGAPGAGKGTQAKIIEQKYNIAHISTGDMIRETIKSGSALGQELKKVLDAGELVSDEFIIKIVKDRISKNDCNNGFLLDGVPRTIPQAQELDKLGVNIDYIVEVDVADNLLIERITGRRIHPASGRTYHTKFNPPKVADKDDVTGEPLITRTDDNEDTVKQRLSVYHAQTAKLIDFYRNFSSTNTKIPKYIKINGDQAVEKVSQDIFDQLNKR</sequence>
<feature type="chain" id="PRO_1000058833" description="Adenylate kinase">
    <location>
        <begin position="1"/>
        <end position="218"/>
    </location>
</feature>
<feature type="region of interest" description="NMP" evidence="1">
    <location>
        <begin position="30"/>
        <end position="59"/>
    </location>
</feature>
<feature type="region of interest" description="LID" evidence="1">
    <location>
        <begin position="122"/>
        <end position="159"/>
    </location>
</feature>
<feature type="binding site" evidence="1">
    <location>
        <begin position="10"/>
        <end position="15"/>
    </location>
    <ligand>
        <name>ATP</name>
        <dbReference type="ChEBI" id="CHEBI:30616"/>
    </ligand>
</feature>
<feature type="binding site" evidence="1">
    <location>
        <position position="31"/>
    </location>
    <ligand>
        <name>AMP</name>
        <dbReference type="ChEBI" id="CHEBI:456215"/>
    </ligand>
</feature>
<feature type="binding site" evidence="1">
    <location>
        <position position="36"/>
    </location>
    <ligand>
        <name>AMP</name>
        <dbReference type="ChEBI" id="CHEBI:456215"/>
    </ligand>
</feature>
<feature type="binding site" evidence="1">
    <location>
        <begin position="57"/>
        <end position="59"/>
    </location>
    <ligand>
        <name>AMP</name>
        <dbReference type="ChEBI" id="CHEBI:456215"/>
    </ligand>
</feature>
<feature type="binding site" evidence="1">
    <location>
        <position position="92"/>
    </location>
    <ligand>
        <name>AMP</name>
        <dbReference type="ChEBI" id="CHEBI:456215"/>
    </ligand>
</feature>
<feature type="binding site" evidence="1">
    <location>
        <position position="123"/>
    </location>
    <ligand>
        <name>ATP</name>
        <dbReference type="ChEBI" id="CHEBI:30616"/>
    </ligand>
</feature>
<feature type="binding site" evidence="1">
    <location>
        <begin position="132"/>
        <end position="133"/>
    </location>
    <ligand>
        <name>ATP</name>
        <dbReference type="ChEBI" id="CHEBI:30616"/>
    </ligand>
</feature>
<feature type="binding site" evidence="1">
    <location>
        <position position="156"/>
    </location>
    <ligand>
        <name>AMP</name>
        <dbReference type="ChEBI" id="CHEBI:456215"/>
    </ligand>
</feature>
<feature type="binding site" evidence="1">
    <location>
        <position position="167"/>
    </location>
    <ligand>
        <name>AMP</name>
        <dbReference type="ChEBI" id="CHEBI:456215"/>
    </ligand>
</feature>
<feature type="binding site" evidence="1">
    <location>
        <position position="202"/>
    </location>
    <ligand>
        <name>ATP</name>
        <dbReference type="ChEBI" id="CHEBI:30616"/>
    </ligand>
</feature>
<keyword id="KW-0067">ATP-binding</keyword>
<keyword id="KW-0963">Cytoplasm</keyword>
<keyword id="KW-0418">Kinase</keyword>
<keyword id="KW-0545">Nucleotide biosynthesis</keyword>
<keyword id="KW-0547">Nucleotide-binding</keyword>
<keyword id="KW-0808">Transferase</keyword>
<organism>
    <name type="scientific">Francisella tularensis subsp. tularensis (strain WY96-3418)</name>
    <dbReference type="NCBI Taxonomy" id="418136"/>
    <lineage>
        <taxon>Bacteria</taxon>
        <taxon>Pseudomonadati</taxon>
        <taxon>Pseudomonadota</taxon>
        <taxon>Gammaproteobacteria</taxon>
        <taxon>Thiotrichales</taxon>
        <taxon>Francisellaceae</taxon>
        <taxon>Francisella</taxon>
    </lineage>
</organism>
<reference key="1">
    <citation type="journal article" date="2007" name="PLoS ONE">
        <title>Complete genomic characterization of a pathogenic A.II strain of Francisella tularensis subspecies tularensis.</title>
        <authorList>
            <person name="Beckstrom-Sternberg S.M."/>
            <person name="Auerbach R.K."/>
            <person name="Godbole S."/>
            <person name="Pearson J.V."/>
            <person name="Beckstrom-Sternberg J.S."/>
            <person name="Deng Z."/>
            <person name="Munk C."/>
            <person name="Kubota K."/>
            <person name="Zhou Y."/>
            <person name="Bruce D."/>
            <person name="Noronha J."/>
            <person name="Scheuermann R.H."/>
            <person name="Wang A."/>
            <person name="Wei X."/>
            <person name="Wang J."/>
            <person name="Hao J."/>
            <person name="Wagner D.M."/>
            <person name="Brettin T.S."/>
            <person name="Brown N."/>
            <person name="Gilna P."/>
            <person name="Keim P.S."/>
        </authorList>
    </citation>
    <scope>NUCLEOTIDE SEQUENCE [LARGE SCALE GENOMIC DNA]</scope>
    <source>
        <strain>WY96-3418</strain>
    </source>
</reference>
<protein>
    <recommendedName>
        <fullName evidence="1">Adenylate kinase</fullName>
        <shortName evidence="1">AK</shortName>
        <ecNumber evidence="1">2.7.4.3</ecNumber>
    </recommendedName>
    <alternativeName>
        <fullName evidence="1">ATP-AMP transphosphorylase</fullName>
    </alternativeName>
    <alternativeName>
        <fullName evidence="1">ATP:AMP phosphotransferase</fullName>
    </alternativeName>
    <alternativeName>
        <fullName evidence="1">Adenylate monophosphate kinase</fullName>
    </alternativeName>
</protein>
<name>KAD_FRATW</name>
<evidence type="ECO:0000255" key="1">
    <source>
        <dbReference type="HAMAP-Rule" id="MF_00235"/>
    </source>
</evidence>
<proteinExistence type="inferred from homology"/>